<organism>
    <name type="scientific">Streptococcus pyogenes serotype M49 (strain NZ131)</name>
    <dbReference type="NCBI Taxonomy" id="471876"/>
    <lineage>
        <taxon>Bacteria</taxon>
        <taxon>Bacillati</taxon>
        <taxon>Bacillota</taxon>
        <taxon>Bacilli</taxon>
        <taxon>Lactobacillales</taxon>
        <taxon>Streptococcaceae</taxon>
        <taxon>Streptococcus</taxon>
    </lineage>
</organism>
<protein>
    <recommendedName>
        <fullName evidence="1">ATP-dependent helicase/nuclease subunit A</fullName>
        <ecNumber evidence="1">3.1.-.-</ecNumber>
        <ecNumber evidence="1">5.6.2.4</ecNumber>
    </recommendedName>
    <alternativeName>
        <fullName evidence="1">ATP-dependent helicase/nuclease AddA</fullName>
    </alternativeName>
    <alternativeName>
        <fullName evidence="1">DNA 3'-5' helicase AddA</fullName>
    </alternativeName>
</protein>
<name>ADDA_STRPZ</name>
<feature type="chain" id="PRO_0000379348" description="ATP-dependent helicase/nuclease subunit A">
    <location>
        <begin position="1"/>
        <end position="1222"/>
    </location>
</feature>
<feature type="domain" description="UvrD-like helicase ATP-binding" evidence="1">
    <location>
        <begin position="39"/>
        <end position="495"/>
    </location>
</feature>
<feature type="domain" description="UvrD-like helicase C-terminal" evidence="1">
    <location>
        <begin position="524"/>
        <end position="810"/>
    </location>
</feature>
<feature type="binding site" evidence="1">
    <location>
        <begin position="60"/>
        <end position="67"/>
    </location>
    <ligand>
        <name>ATP</name>
        <dbReference type="ChEBI" id="CHEBI:30616"/>
    </ligand>
</feature>
<reference key="1">
    <citation type="journal article" date="2008" name="J. Bacteriol.">
        <title>Genome sequence of a nephritogenic and highly transformable M49 strain of Streptococcus pyogenes.</title>
        <authorList>
            <person name="McShan W.M."/>
            <person name="Ferretti J.J."/>
            <person name="Karasawa T."/>
            <person name="Suvorov A.N."/>
            <person name="Lin S."/>
            <person name="Qin B."/>
            <person name="Jia H."/>
            <person name="Kenton S."/>
            <person name="Najar F."/>
            <person name="Wu H."/>
            <person name="Scott J."/>
            <person name="Roe B.A."/>
            <person name="Savic D.J."/>
        </authorList>
    </citation>
    <scope>NUCLEOTIDE SEQUENCE [LARGE SCALE GENOMIC DNA]</scope>
    <source>
        <strain>NZ131</strain>
    </source>
</reference>
<sequence length="1222" mass="140275">MLFNINEKGEPLVISFAPFLSPEAIKHLQENERCSDQSQKRTAQQIEAIYTSGQNILVSASAGSGKTFVMVERILDKILRGVSIDRLFISTFTVKAATELRERIENKLYSQIAQTTDFQMKVYLTEQLQSLCQADIGTMDAFAQKVVSRYGYSIGISSQFRIMQDKAEQDVLKQEVFSKLFSEFMNQKEAPVFRALVKNFSGNCKDTSAFRELVYTCYSFSQSTENPKIWLQENFLSAAKTYQRLEDIPDHDIELLLLAMQDTANQLRDVTDMEDYGQLTKAGSRSAKYTKHLTIIEKLSDWVRDFKCLYGKAGLDRLIRDVTGLIPSGNDVTVSKVKYPVFKTLHQKLKQFRHLETILMYQKDCFPLLEQLQDFVLAFSEAYLAVKIQESAFEFSDIAHFAIKILEENTDIRQSYQQHYHEVMVDEYQDNNHMQERLLTLLSNGHNRFMVGDIKQSIYRFRQADPQIFNQKFRDYQKKTEQGKVILLKENFRSQSEVLNVSNAVFSHLMDESVGDVLYDEQHQLIAGSHAQTVPYLDRRAQLLLYNSDKDDGNAPSDSEGISFSEVTIVAKEIIKLHNDKGVPFEDITLLVSSRTRNDIISHTFNQYGIPIVTDGGQQNYLKSVEVMVMLDTLRTINNPRNDYALVALLRSPMFAFDEDDLARIALQKDNELDKDCLYDKIQRAVIGRGAYPELIHDTLLGKLNVFLKTLKSWRRYAKLGSLYDLILENFHERFYFDFVASQAKAEQAQANLYALALRANQFEKSGYKGLYRFIKMIDKVLETQNDLADVEVATPKQAVNLMTIHKSKGLQFPYVFILNCDKRFSMTDIHKSFILNRQHGIGIKYLADIKGLLGETTLNSVKVSMETLPYQLNKQELRLATLSEEMRLLYVAMTRAEKKVYFIGKASKSKSQEITDPKKLGKLLPLALREQLLTFQDWLLAIADIFSTEDLYFDVRFIEDSDLTQESVGRLQTPQLLNPDDLKDNRQSETIARALDMLEAVSQLNANYEAAIHLPTVRTPSQLKATYEPLLEPIGVDIIEKSSRSLSDFTLPHFSKKAKVEASHIGSALHQLMQVLPLSKPINQQTLLDALRGIDSNEEVKTALDLKKIESFFCDTSLGQFFQTYQKHLYREAPFAILKLDPISQEEYVLRGIIDAYFLFDDHIVLVDYKTDKYKQPIELKKRYQQQLELYAEALTQTYKLPVTKRYLVLMGGGKPEIVEV</sequence>
<proteinExistence type="inferred from homology"/>
<evidence type="ECO:0000255" key="1">
    <source>
        <dbReference type="HAMAP-Rule" id="MF_01451"/>
    </source>
</evidence>
<comment type="function">
    <text evidence="1">The heterodimer acts as both an ATP-dependent DNA helicase and an ATP-dependent, dual-direction single-stranded exonuclease. Recognizes the chi site generating a DNA molecule suitable for the initiation of homologous recombination. The AddA nuclease domain is required for chi fragment generation; this subunit has the helicase and 3' -&gt; 5' nuclease activities.</text>
</comment>
<comment type="catalytic activity">
    <reaction evidence="1">
        <text>Couples ATP hydrolysis with the unwinding of duplex DNA by translocating in the 3'-5' direction.</text>
        <dbReference type="EC" id="5.6.2.4"/>
    </reaction>
</comment>
<comment type="catalytic activity">
    <reaction evidence="1">
        <text>ATP + H2O = ADP + phosphate + H(+)</text>
        <dbReference type="Rhea" id="RHEA:13065"/>
        <dbReference type="ChEBI" id="CHEBI:15377"/>
        <dbReference type="ChEBI" id="CHEBI:15378"/>
        <dbReference type="ChEBI" id="CHEBI:30616"/>
        <dbReference type="ChEBI" id="CHEBI:43474"/>
        <dbReference type="ChEBI" id="CHEBI:456216"/>
        <dbReference type="EC" id="5.6.2.4"/>
    </reaction>
</comment>
<comment type="cofactor">
    <cofactor evidence="1">
        <name>Mg(2+)</name>
        <dbReference type="ChEBI" id="CHEBI:18420"/>
    </cofactor>
</comment>
<comment type="subunit">
    <text evidence="1">Heterodimer of AddA and AddB/RexB.</text>
</comment>
<comment type="similarity">
    <text evidence="1">Belongs to the helicase family. AddA subfamily.</text>
</comment>
<accession>B5XKR4</accession>
<gene>
    <name evidence="1" type="primary">addA</name>
    <name type="synonym">rexA</name>
    <name type="ordered locus">Spy49_0604</name>
</gene>
<dbReference type="EC" id="3.1.-.-" evidence="1"/>
<dbReference type="EC" id="5.6.2.4" evidence="1"/>
<dbReference type="EMBL" id="CP000829">
    <property type="protein sequence ID" value="ACI60926.1"/>
    <property type="molecule type" value="Genomic_DNA"/>
</dbReference>
<dbReference type="SMR" id="B5XKR4"/>
<dbReference type="KEGG" id="soz:Spy49_0604"/>
<dbReference type="HOGENOM" id="CLU_001114_3_1_9"/>
<dbReference type="Proteomes" id="UP000001039">
    <property type="component" value="Chromosome"/>
</dbReference>
<dbReference type="GO" id="GO:0005829">
    <property type="term" value="C:cytosol"/>
    <property type="evidence" value="ECO:0007669"/>
    <property type="project" value="TreeGrafter"/>
</dbReference>
<dbReference type="GO" id="GO:0033202">
    <property type="term" value="C:DNA helicase complex"/>
    <property type="evidence" value="ECO:0007669"/>
    <property type="project" value="TreeGrafter"/>
</dbReference>
<dbReference type="GO" id="GO:0043138">
    <property type="term" value="F:3'-5' DNA helicase activity"/>
    <property type="evidence" value="ECO:0007669"/>
    <property type="project" value="UniProtKB-UniRule"/>
</dbReference>
<dbReference type="GO" id="GO:0008408">
    <property type="term" value="F:3'-5' exonuclease activity"/>
    <property type="evidence" value="ECO:0007669"/>
    <property type="project" value="UniProtKB-UniRule"/>
</dbReference>
<dbReference type="GO" id="GO:0005524">
    <property type="term" value="F:ATP binding"/>
    <property type="evidence" value="ECO:0007669"/>
    <property type="project" value="UniProtKB-UniRule"/>
</dbReference>
<dbReference type="GO" id="GO:0016887">
    <property type="term" value="F:ATP hydrolysis activity"/>
    <property type="evidence" value="ECO:0007669"/>
    <property type="project" value="RHEA"/>
</dbReference>
<dbReference type="GO" id="GO:0003690">
    <property type="term" value="F:double-stranded DNA binding"/>
    <property type="evidence" value="ECO:0007669"/>
    <property type="project" value="UniProtKB-UniRule"/>
</dbReference>
<dbReference type="GO" id="GO:0000724">
    <property type="term" value="P:double-strand break repair via homologous recombination"/>
    <property type="evidence" value="ECO:0007669"/>
    <property type="project" value="UniProtKB-UniRule"/>
</dbReference>
<dbReference type="CDD" id="cd17932">
    <property type="entry name" value="DEXQc_UvrD"/>
    <property type="match status" value="1"/>
</dbReference>
<dbReference type="Gene3D" id="3.90.320.10">
    <property type="match status" value="1"/>
</dbReference>
<dbReference type="Gene3D" id="3.40.50.300">
    <property type="entry name" value="P-loop containing nucleotide triphosphate hydrolases"/>
    <property type="match status" value="4"/>
</dbReference>
<dbReference type="Gene3D" id="1.10.486.10">
    <property type="entry name" value="PCRA, domain 4"/>
    <property type="match status" value="1"/>
</dbReference>
<dbReference type="HAMAP" id="MF_01451">
    <property type="entry name" value="AddA"/>
    <property type="match status" value="1"/>
</dbReference>
<dbReference type="InterPro" id="IPR014152">
    <property type="entry name" value="AddA"/>
</dbReference>
<dbReference type="InterPro" id="IPR014017">
    <property type="entry name" value="DNA_helicase_UvrD-like_C"/>
</dbReference>
<dbReference type="InterPro" id="IPR000212">
    <property type="entry name" value="DNA_helicase_UvrD/REP"/>
</dbReference>
<dbReference type="InterPro" id="IPR027417">
    <property type="entry name" value="P-loop_NTPase"/>
</dbReference>
<dbReference type="InterPro" id="IPR011604">
    <property type="entry name" value="PDDEXK-like_dom_sf"/>
</dbReference>
<dbReference type="InterPro" id="IPR038726">
    <property type="entry name" value="PDDEXK_AddAB-type"/>
</dbReference>
<dbReference type="InterPro" id="IPR011335">
    <property type="entry name" value="Restrct_endonuc-II-like"/>
</dbReference>
<dbReference type="InterPro" id="IPR014016">
    <property type="entry name" value="UvrD-like_ATP-bd"/>
</dbReference>
<dbReference type="NCBIfam" id="TIGR02785">
    <property type="entry name" value="addA_Gpos"/>
    <property type="match status" value="1"/>
</dbReference>
<dbReference type="PANTHER" id="PTHR11070:SF48">
    <property type="entry name" value="ATP-DEPENDENT HELICASE_NUCLEASE SUBUNIT A"/>
    <property type="match status" value="1"/>
</dbReference>
<dbReference type="PANTHER" id="PTHR11070">
    <property type="entry name" value="UVRD / RECB / PCRA DNA HELICASE FAMILY MEMBER"/>
    <property type="match status" value="1"/>
</dbReference>
<dbReference type="Pfam" id="PF12705">
    <property type="entry name" value="PDDEXK_1"/>
    <property type="match status" value="1"/>
</dbReference>
<dbReference type="Pfam" id="PF00580">
    <property type="entry name" value="UvrD-helicase"/>
    <property type="match status" value="1"/>
</dbReference>
<dbReference type="Pfam" id="PF13361">
    <property type="entry name" value="UvrD_C"/>
    <property type="match status" value="1"/>
</dbReference>
<dbReference type="SUPFAM" id="SSF52540">
    <property type="entry name" value="P-loop containing nucleoside triphosphate hydrolases"/>
    <property type="match status" value="1"/>
</dbReference>
<dbReference type="SUPFAM" id="SSF52980">
    <property type="entry name" value="Restriction endonuclease-like"/>
    <property type="match status" value="1"/>
</dbReference>
<dbReference type="PROSITE" id="PS51198">
    <property type="entry name" value="UVRD_HELICASE_ATP_BIND"/>
    <property type="match status" value="1"/>
</dbReference>
<dbReference type="PROSITE" id="PS51217">
    <property type="entry name" value="UVRD_HELICASE_CTER"/>
    <property type="match status" value="1"/>
</dbReference>
<keyword id="KW-0067">ATP-binding</keyword>
<keyword id="KW-0227">DNA damage</keyword>
<keyword id="KW-0234">DNA repair</keyword>
<keyword id="KW-0238">DNA-binding</keyword>
<keyword id="KW-0269">Exonuclease</keyword>
<keyword id="KW-0347">Helicase</keyword>
<keyword id="KW-0378">Hydrolase</keyword>
<keyword id="KW-0413">Isomerase</keyword>
<keyword id="KW-0540">Nuclease</keyword>
<keyword id="KW-0547">Nucleotide-binding</keyword>